<accession>Q9PJK9</accession>
<evidence type="ECO:0000255" key="1">
    <source>
        <dbReference type="HAMAP-Rule" id="MF_00388"/>
    </source>
</evidence>
<evidence type="ECO:0000305" key="2"/>
<proteinExistence type="inferred from homology"/>
<reference key="1">
    <citation type="journal article" date="2000" name="Nucleic Acids Res.">
        <title>Genome sequences of Chlamydia trachomatis MoPn and Chlamydia pneumoniae AR39.</title>
        <authorList>
            <person name="Read T.D."/>
            <person name="Brunham R.C."/>
            <person name="Shen C."/>
            <person name="Gill S.R."/>
            <person name="Heidelberg J.F."/>
            <person name="White O."/>
            <person name="Hickey E.K."/>
            <person name="Peterson J.D."/>
            <person name="Utterback T.R."/>
            <person name="Berry K.J."/>
            <person name="Bass S."/>
            <person name="Linher K.D."/>
            <person name="Weidman J.F."/>
            <person name="Khouri H.M."/>
            <person name="Craven B."/>
            <person name="Bowman C."/>
            <person name="Dodson R.J."/>
            <person name="Gwinn M.L."/>
            <person name="Nelson W.C."/>
            <person name="DeBoy R.T."/>
            <person name="Kolonay J.F."/>
            <person name="McClarty G."/>
            <person name="Salzberg S.L."/>
            <person name="Eisen J.A."/>
            <person name="Fraser C.M."/>
        </authorList>
    </citation>
    <scope>NUCLEOTIDE SEQUENCE [LARGE SCALE GENOMIC DNA]</scope>
    <source>
        <strain>MoPn / Nigg</strain>
    </source>
</reference>
<keyword id="KW-0378">Hydrolase</keyword>
<keyword id="KW-0441">Lipid A biosynthesis</keyword>
<keyword id="KW-0444">Lipid biosynthesis</keyword>
<keyword id="KW-0443">Lipid metabolism</keyword>
<keyword id="KW-0479">Metal-binding</keyword>
<keyword id="KW-0862">Zinc</keyword>
<sequence length="286" mass="31150">MLGRAQRTLKRKVCYSGVGVHFGKPAMLTLEPAEENTGVVFSRHAASGQYIPARLANVCGTGRSTTLSSQGGVVSTVEHLLAALYSCGVDNVRIHCSEDEIPIGDGSSQVFVDLIDQAGVEEQGQTVPIARLTHPVYYQHQDTILAAFPSEEFKISYTLHYSHNSAIGTQYRSQVISEESFRKEIAPCRTFALYNELCFLMERGLIGGGCLGNAVLFKDDSVISLGKLRFPDEPVRHKMLDLIGDLSLIGKPFLAHIIAVGSGHSSNIALGNKILEALQYEQELVK</sequence>
<protein>
    <recommendedName>
        <fullName evidence="1">UDP-3-O-acyl-N-acetylglucosamine deacetylase</fullName>
        <shortName evidence="1">UDP-3-O-acyl-GlcNAc deacetylase</shortName>
        <ecNumber evidence="1">3.5.1.108</ecNumber>
    </recommendedName>
    <alternativeName>
        <fullName evidence="1">UDP-3-O-[R-3-hydroxymyristoyl]-N-acetylglucosamine deacetylase</fullName>
    </alternativeName>
</protein>
<organism>
    <name type="scientific">Chlamydia muridarum (strain MoPn / Nigg)</name>
    <dbReference type="NCBI Taxonomy" id="243161"/>
    <lineage>
        <taxon>Bacteria</taxon>
        <taxon>Pseudomonadati</taxon>
        <taxon>Chlamydiota</taxon>
        <taxon>Chlamydiia</taxon>
        <taxon>Chlamydiales</taxon>
        <taxon>Chlamydiaceae</taxon>
        <taxon>Chlamydia/Chlamydophila group</taxon>
        <taxon>Chlamydia</taxon>
    </lineage>
</organism>
<feature type="chain" id="PRO_0000191925" description="UDP-3-O-acyl-N-acetylglucosamine deacetylase">
    <location>
        <begin position="1"/>
        <end position="286"/>
    </location>
</feature>
<feature type="active site" description="Proton donor" evidence="1">
    <location>
        <position position="264"/>
    </location>
</feature>
<feature type="binding site" evidence="1">
    <location>
        <position position="79"/>
    </location>
    <ligand>
        <name>Zn(2+)</name>
        <dbReference type="ChEBI" id="CHEBI:29105"/>
    </ligand>
</feature>
<feature type="binding site" evidence="1">
    <location>
        <position position="237"/>
    </location>
    <ligand>
        <name>Zn(2+)</name>
        <dbReference type="ChEBI" id="CHEBI:29105"/>
    </ligand>
</feature>
<feature type="binding site" evidence="1">
    <location>
        <position position="241"/>
    </location>
    <ligand>
        <name>Zn(2+)</name>
        <dbReference type="ChEBI" id="CHEBI:29105"/>
    </ligand>
</feature>
<dbReference type="EC" id="3.5.1.108" evidence="1"/>
<dbReference type="EMBL" id="AE002160">
    <property type="protein sequence ID" value="AAF39622.1"/>
    <property type="status" value="ALT_INIT"/>
    <property type="molecule type" value="Genomic_DNA"/>
</dbReference>
<dbReference type="PIR" id="A81662">
    <property type="entry name" value="A81662"/>
</dbReference>
<dbReference type="RefSeq" id="WP_010231676.1">
    <property type="nucleotide sequence ID" value="NZ_CP063055.1"/>
</dbReference>
<dbReference type="SMR" id="Q9PJK9"/>
<dbReference type="GeneID" id="1246187"/>
<dbReference type="KEGG" id="cmu:TC_0820"/>
<dbReference type="eggNOG" id="COG0774">
    <property type="taxonomic scope" value="Bacteria"/>
</dbReference>
<dbReference type="HOGENOM" id="CLU_046528_1_0_0"/>
<dbReference type="OrthoDB" id="9772788at2"/>
<dbReference type="UniPathway" id="UPA00359">
    <property type="reaction ID" value="UER00478"/>
</dbReference>
<dbReference type="Proteomes" id="UP000000800">
    <property type="component" value="Chromosome"/>
</dbReference>
<dbReference type="GO" id="GO:0016020">
    <property type="term" value="C:membrane"/>
    <property type="evidence" value="ECO:0007669"/>
    <property type="project" value="GOC"/>
</dbReference>
<dbReference type="GO" id="GO:0046872">
    <property type="term" value="F:metal ion binding"/>
    <property type="evidence" value="ECO:0007669"/>
    <property type="project" value="UniProtKB-KW"/>
</dbReference>
<dbReference type="GO" id="GO:0103117">
    <property type="term" value="F:UDP-3-O-acyl-N-acetylglucosamine deacetylase activity"/>
    <property type="evidence" value="ECO:0007669"/>
    <property type="project" value="UniProtKB-UniRule"/>
</dbReference>
<dbReference type="GO" id="GO:0009245">
    <property type="term" value="P:lipid A biosynthetic process"/>
    <property type="evidence" value="ECO:0007669"/>
    <property type="project" value="UniProtKB-UniRule"/>
</dbReference>
<dbReference type="Gene3D" id="3.30.230.20">
    <property type="entry name" value="lpxc deacetylase, domain 1"/>
    <property type="match status" value="1"/>
</dbReference>
<dbReference type="Gene3D" id="3.30.1700.10">
    <property type="entry name" value="lpxc deacetylase, domain 2"/>
    <property type="match status" value="1"/>
</dbReference>
<dbReference type="HAMAP" id="MF_00388">
    <property type="entry name" value="LpxC"/>
    <property type="match status" value="1"/>
</dbReference>
<dbReference type="InterPro" id="IPR020568">
    <property type="entry name" value="Ribosomal_Su5_D2-typ_SF"/>
</dbReference>
<dbReference type="InterPro" id="IPR004463">
    <property type="entry name" value="UDP-acyl_GlcNac_deAcase"/>
</dbReference>
<dbReference type="InterPro" id="IPR011334">
    <property type="entry name" value="UDP-acyl_GlcNac_deAcase_C"/>
</dbReference>
<dbReference type="InterPro" id="IPR015870">
    <property type="entry name" value="UDP-acyl_N-AcGlcN_deAcase_N"/>
</dbReference>
<dbReference type="NCBIfam" id="TIGR00325">
    <property type="entry name" value="lpxC"/>
    <property type="match status" value="1"/>
</dbReference>
<dbReference type="PANTHER" id="PTHR33694">
    <property type="entry name" value="UDP-3-O-ACYL-N-ACETYLGLUCOSAMINE DEACETYLASE 1, MITOCHONDRIAL-RELATED"/>
    <property type="match status" value="1"/>
</dbReference>
<dbReference type="PANTHER" id="PTHR33694:SF1">
    <property type="entry name" value="UDP-3-O-ACYL-N-ACETYLGLUCOSAMINE DEACETYLASE 1, MITOCHONDRIAL-RELATED"/>
    <property type="match status" value="1"/>
</dbReference>
<dbReference type="Pfam" id="PF03331">
    <property type="entry name" value="LpxC"/>
    <property type="match status" value="1"/>
</dbReference>
<dbReference type="SUPFAM" id="SSF54211">
    <property type="entry name" value="Ribosomal protein S5 domain 2-like"/>
    <property type="match status" value="2"/>
</dbReference>
<comment type="function">
    <text evidence="1">Catalyzes the hydrolysis of UDP-3-O-myristoyl-N-acetylglucosamine to form UDP-3-O-myristoylglucosamine and acetate, the committed step in lipid A biosynthesis.</text>
</comment>
<comment type="catalytic activity">
    <reaction evidence="1">
        <text>a UDP-3-O-[(3R)-3-hydroxyacyl]-N-acetyl-alpha-D-glucosamine + H2O = a UDP-3-O-[(3R)-3-hydroxyacyl]-alpha-D-glucosamine + acetate</text>
        <dbReference type="Rhea" id="RHEA:67816"/>
        <dbReference type="ChEBI" id="CHEBI:15377"/>
        <dbReference type="ChEBI" id="CHEBI:30089"/>
        <dbReference type="ChEBI" id="CHEBI:137740"/>
        <dbReference type="ChEBI" id="CHEBI:173225"/>
        <dbReference type="EC" id="3.5.1.108"/>
    </reaction>
</comment>
<comment type="cofactor">
    <cofactor evidence="1">
        <name>Zn(2+)</name>
        <dbReference type="ChEBI" id="CHEBI:29105"/>
    </cofactor>
</comment>
<comment type="pathway">
    <text evidence="1">Glycolipid biosynthesis; lipid IV(A) biosynthesis; lipid IV(A) from (3R)-3-hydroxytetradecanoyl-[acyl-carrier-protein] and UDP-N-acetyl-alpha-D-glucosamine: step 2/6.</text>
</comment>
<comment type="similarity">
    <text evidence="1">Belongs to the LpxC family.</text>
</comment>
<comment type="sequence caution" evidence="2">
    <conflict type="erroneous initiation">
        <sequence resource="EMBL-CDS" id="AAF39622"/>
    </conflict>
</comment>
<name>LPXC_CHLMU</name>
<gene>
    <name evidence="1" type="primary">lpxC</name>
    <name type="ordered locus">TC_0820</name>
</gene>